<proteinExistence type="inferred from homology"/>
<comment type="function">
    <text evidence="1">Accelerates the degradation of transcripts by removing pyrophosphate from the 5'-end of triphosphorylated RNA, leading to a more labile monophosphorylated state that can stimulate subsequent ribonuclease cleavage.</text>
</comment>
<comment type="cofactor">
    <cofactor evidence="1">
        <name>a divalent metal cation</name>
        <dbReference type="ChEBI" id="CHEBI:60240"/>
    </cofactor>
</comment>
<comment type="similarity">
    <text evidence="1">Belongs to the Nudix hydrolase family. RppH subfamily.</text>
</comment>
<protein>
    <recommendedName>
        <fullName evidence="1">RNA pyrophosphohydrolase</fullName>
        <ecNumber evidence="1">3.6.1.-</ecNumber>
    </recommendedName>
    <alternativeName>
        <fullName evidence="1">(Di)nucleoside polyphosphate hydrolase</fullName>
    </alternativeName>
</protein>
<name>RPPH_YERPP</name>
<dbReference type="EC" id="3.6.1.-" evidence="1"/>
<dbReference type="EMBL" id="CP000668">
    <property type="protein sequence ID" value="ABP40090.1"/>
    <property type="molecule type" value="Genomic_DNA"/>
</dbReference>
<dbReference type="RefSeq" id="WP_002211381.1">
    <property type="nucleotide sequence ID" value="NZ_CP009715.1"/>
</dbReference>
<dbReference type="SMR" id="A4TLC8"/>
<dbReference type="GeneID" id="57973848"/>
<dbReference type="KEGG" id="ypp:YPDSF_1705"/>
<dbReference type="PATRIC" id="fig|386656.14.peg.2056"/>
<dbReference type="GO" id="GO:0005737">
    <property type="term" value="C:cytoplasm"/>
    <property type="evidence" value="ECO:0007669"/>
    <property type="project" value="TreeGrafter"/>
</dbReference>
<dbReference type="GO" id="GO:0034353">
    <property type="term" value="F:mRNA 5'-diphosphatase activity"/>
    <property type="evidence" value="ECO:0007669"/>
    <property type="project" value="TreeGrafter"/>
</dbReference>
<dbReference type="GO" id="GO:0006402">
    <property type="term" value="P:mRNA catabolic process"/>
    <property type="evidence" value="ECO:0007669"/>
    <property type="project" value="TreeGrafter"/>
</dbReference>
<dbReference type="CDD" id="cd03671">
    <property type="entry name" value="NUDIX_Ap4A_hydrolase_plant_like"/>
    <property type="match status" value="1"/>
</dbReference>
<dbReference type="FunFam" id="3.90.79.10:FF:000001">
    <property type="entry name" value="RNA pyrophosphohydrolase"/>
    <property type="match status" value="1"/>
</dbReference>
<dbReference type="Gene3D" id="3.90.79.10">
    <property type="entry name" value="Nucleoside Triphosphate Pyrophosphohydrolase"/>
    <property type="match status" value="1"/>
</dbReference>
<dbReference type="HAMAP" id="MF_00298">
    <property type="entry name" value="Nudix_RppH"/>
    <property type="match status" value="1"/>
</dbReference>
<dbReference type="InterPro" id="IPR020476">
    <property type="entry name" value="Nudix_hydrolase"/>
</dbReference>
<dbReference type="InterPro" id="IPR015797">
    <property type="entry name" value="NUDIX_hydrolase-like_dom_sf"/>
</dbReference>
<dbReference type="InterPro" id="IPR020084">
    <property type="entry name" value="NUDIX_hydrolase_CS"/>
</dbReference>
<dbReference type="InterPro" id="IPR000086">
    <property type="entry name" value="NUDIX_hydrolase_dom"/>
</dbReference>
<dbReference type="InterPro" id="IPR022927">
    <property type="entry name" value="RppH"/>
</dbReference>
<dbReference type="NCBIfam" id="NF001934">
    <property type="entry name" value="PRK00714.1-1"/>
    <property type="match status" value="1"/>
</dbReference>
<dbReference type="NCBIfam" id="NF001937">
    <property type="entry name" value="PRK00714.1-4"/>
    <property type="match status" value="1"/>
</dbReference>
<dbReference type="NCBIfam" id="NF001938">
    <property type="entry name" value="PRK00714.1-5"/>
    <property type="match status" value="1"/>
</dbReference>
<dbReference type="PANTHER" id="PTHR23114">
    <property type="entry name" value="M7GPPPN-MRNA HYDROLASE"/>
    <property type="match status" value="1"/>
</dbReference>
<dbReference type="PANTHER" id="PTHR23114:SF17">
    <property type="entry name" value="M7GPPPN-MRNA HYDROLASE"/>
    <property type="match status" value="1"/>
</dbReference>
<dbReference type="Pfam" id="PF00293">
    <property type="entry name" value="NUDIX"/>
    <property type="match status" value="1"/>
</dbReference>
<dbReference type="PRINTS" id="PR00502">
    <property type="entry name" value="NUDIXFAMILY"/>
</dbReference>
<dbReference type="SUPFAM" id="SSF55811">
    <property type="entry name" value="Nudix"/>
    <property type="match status" value="1"/>
</dbReference>
<dbReference type="PROSITE" id="PS51462">
    <property type="entry name" value="NUDIX"/>
    <property type="match status" value="1"/>
</dbReference>
<dbReference type="PROSITE" id="PS00893">
    <property type="entry name" value="NUDIX_BOX"/>
    <property type="match status" value="1"/>
</dbReference>
<evidence type="ECO:0000255" key="1">
    <source>
        <dbReference type="HAMAP-Rule" id="MF_00298"/>
    </source>
</evidence>
<feature type="chain" id="PRO_1000022011" description="RNA pyrophosphohydrolase">
    <location>
        <begin position="1"/>
        <end position="175"/>
    </location>
</feature>
<feature type="domain" description="Nudix hydrolase" evidence="1">
    <location>
        <begin position="6"/>
        <end position="149"/>
    </location>
</feature>
<feature type="short sequence motif" description="Nudix box">
    <location>
        <begin position="38"/>
        <end position="59"/>
    </location>
</feature>
<sequence length="175" mass="20893">MIDDDGYRPNVGIVICNRQGEVLWARRYGQHSWQFPQGGINPGETPEQAMYRELFEEVGLNKKDVRILASTRNWLRYKLPKRLVRWDTKPVCIGQKQRWFLLQLMCNEAEINMQRSSTPEFDGWRWVSYWYPVRQVVSFKRDVYRRVMKEFAATVMPVQEVAPPRVPPAYRRKRG</sequence>
<keyword id="KW-0378">Hydrolase</keyword>
<organism>
    <name type="scientific">Yersinia pestis (strain Pestoides F)</name>
    <dbReference type="NCBI Taxonomy" id="386656"/>
    <lineage>
        <taxon>Bacteria</taxon>
        <taxon>Pseudomonadati</taxon>
        <taxon>Pseudomonadota</taxon>
        <taxon>Gammaproteobacteria</taxon>
        <taxon>Enterobacterales</taxon>
        <taxon>Yersiniaceae</taxon>
        <taxon>Yersinia</taxon>
    </lineage>
</organism>
<reference key="1">
    <citation type="submission" date="2007-02" db="EMBL/GenBank/DDBJ databases">
        <title>Complete sequence of chromosome of Yersinia pestis Pestoides F.</title>
        <authorList>
            <consortium name="US DOE Joint Genome Institute"/>
            <person name="Copeland A."/>
            <person name="Lucas S."/>
            <person name="Lapidus A."/>
            <person name="Barry K."/>
            <person name="Detter J.C."/>
            <person name="Glavina del Rio T."/>
            <person name="Hammon N."/>
            <person name="Israni S."/>
            <person name="Dalin E."/>
            <person name="Tice H."/>
            <person name="Pitluck S."/>
            <person name="Di Bartolo G."/>
            <person name="Chain P."/>
            <person name="Malfatti S."/>
            <person name="Shin M."/>
            <person name="Vergez L."/>
            <person name="Schmutz J."/>
            <person name="Larimer F."/>
            <person name="Land M."/>
            <person name="Hauser L."/>
            <person name="Worsham P."/>
            <person name="Chu M."/>
            <person name="Bearden S."/>
            <person name="Garcia E."/>
            <person name="Richardson P."/>
        </authorList>
    </citation>
    <scope>NUCLEOTIDE SEQUENCE [LARGE SCALE GENOMIC DNA]</scope>
    <source>
        <strain>Pestoides F</strain>
    </source>
</reference>
<accession>A4TLC8</accession>
<gene>
    <name evidence="1" type="primary">rppH</name>
    <name evidence="1" type="synonym">nudH</name>
    <name type="ordered locus">YPDSF_1705</name>
</gene>